<sequence>MKLTCVVIVAVLFLTACQLITAETYSRGEQKHRALSSTDKNSKLTRTCNTPTQYCTLHRHCCSLYCHKTIHACA</sequence>
<dbReference type="EMBL" id="AF132130">
    <property type="protein sequence ID" value="AAD33586.1"/>
    <property type="molecule type" value="mRNA"/>
</dbReference>
<dbReference type="PIR" id="B59135">
    <property type="entry name" value="B59135"/>
</dbReference>
<dbReference type="ConoServer" id="876">
    <property type="toxin name" value="PuIIA precursor"/>
</dbReference>
<dbReference type="GO" id="GO:0005576">
    <property type="term" value="C:extracellular region"/>
    <property type="evidence" value="ECO:0007669"/>
    <property type="project" value="UniProtKB-SubCell"/>
</dbReference>
<dbReference type="GO" id="GO:0044231">
    <property type="term" value="C:host cell presynaptic membrane"/>
    <property type="evidence" value="ECO:0007669"/>
    <property type="project" value="UniProtKB-KW"/>
</dbReference>
<dbReference type="GO" id="GO:0005246">
    <property type="term" value="F:calcium channel regulator activity"/>
    <property type="evidence" value="ECO:0007669"/>
    <property type="project" value="UniProtKB-KW"/>
</dbReference>
<dbReference type="GO" id="GO:0008200">
    <property type="term" value="F:ion channel inhibitor activity"/>
    <property type="evidence" value="ECO:0007669"/>
    <property type="project" value="InterPro"/>
</dbReference>
<dbReference type="GO" id="GO:0090729">
    <property type="term" value="F:toxin activity"/>
    <property type="evidence" value="ECO:0007669"/>
    <property type="project" value="UniProtKB-KW"/>
</dbReference>
<dbReference type="InterPro" id="IPR004214">
    <property type="entry name" value="Conotoxin"/>
</dbReference>
<dbReference type="InterPro" id="IPR012321">
    <property type="entry name" value="Conotoxin_omega-typ_CS"/>
</dbReference>
<dbReference type="Pfam" id="PF02950">
    <property type="entry name" value="Conotoxin"/>
    <property type="match status" value="1"/>
</dbReference>
<dbReference type="PROSITE" id="PS60004">
    <property type="entry name" value="OMEGA_CONOTOXIN"/>
    <property type="match status" value="1"/>
</dbReference>
<proteinExistence type="evidence at transcript level"/>
<feature type="signal peptide" evidence="2">
    <location>
        <begin position="1"/>
        <end position="22"/>
    </location>
</feature>
<feature type="propeptide" id="PRO_0000034922" evidence="1">
    <location>
        <begin position="23"/>
        <end position="46"/>
    </location>
</feature>
<feature type="peptide" id="PRO_0000034923" description="Omega-conotoxin-like PuIIA">
    <location>
        <begin position="47"/>
        <end position="74"/>
    </location>
</feature>
<feature type="disulfide bond" evidence="1">
    <location>
        <begin position="48"/>
        <end position="62"/>
    </location>
</feature>
<feature type="disulfide bond" evidence="1">
    <location>
        <begin position="55"/>
        <end position="66"/>
    </location>
</feature>
<feature type="disulfide bond" evidence="1">
    <location>
        <begin position="61"/>
        <end position="73"/>
    </location>
</feature>
<reference key="1">
    <citation type="journal article" date="2000" name="Prog. Nat. Sci.">
        <title>Cloning of novel conotoxin precursor sequences from Conus pulicarius.</title>
        <authorList>
            <person name="Zhao D."/>
            <person name="Huang P."/>
        </authorList>
    </citation>
    <scope>NUCLEOTIDE SEQUENCE [MRNA]</scope>
</reference>
<accession>Q9XYZ1</accession>
<organism>
    <name type="scientific">Conus pulicarius</name>
    <name type="common">Flea-bitten cone</name>
    <dbReference type="NCBI Taxonomy" id="93154"/>
    <lineage>
        <taxon>Eukaryota</taxon>
        <taxon>Metazoa</taxon>
        <taxon>Spiralia</taxon>
        <taxon>Lophotrochozoa</taxon>
        <taxon>Mollusca</taxon>
        <taxon>Gastropoda</taxon>
        <taxon>Caenogastropoda</taxon>
        <taxon>Neogastropoda</taxon>
        <taxon>Conoidea</taxon>
        <taxon>Conidae</taxon>
        <taxon>Conus</taxon>
    </lineage>
</organism>
<evidence type="ECO:0000250" key="1"/>
<evidence type="ECO:0000255" key="2"/>
<evidence type="ECO:0000305" key="3"/>
<comment type="function">
    <text evidence="1">Omega-conotoxins act at presynaptic membranes, they bind and block voltage-gated calcium channels (Cav).</text>
</comment>
<comment type="subcellular location">
    <subcellularLocation>
        <location evidence="1">Secreted</location>
    </subcellularLocation>
</comment>
<comment type="tissue specificity">
    <text>Expressed by the venom duct.</text>
</comment>
<comment type="domain">
    <text evidence="1">The presence of a 'disulfide through disulfide knot' structurally defines this protein as a knottin.</text>
</comment>
<comment type="domain">
    <text>The cysteine framework is VI/VII (C-C-CC-C-C).</text>
</comment>
<comment type="similarity">
    <text evidence="3">Belongs to the conotoxin O1 superfamily.</text>
</comment>
<name>O162A_CONPL</name>
<protein>
    <recommendedName>
        <fullName>Omega-conotoxin-like PuIIA</fullName>
    </recommendedName>
</protein>
<keyword id="KW-0108">Calcium channel impairing toxin</keyword>
<keyword id="KW-1015">Disulfide bond</keyword>
<keyword id="KW-0872">Ion channel impairing toxin</keyword>
<keyword id="KW-0960">Knottin</keyword>
<keyword id="KW-0528">Neurotoxin</keyword>
<keyword id="KW-0638">Presynaptic neurotoxin</keyword>
<keyword id="KW-0964">Secreted</keyword>
<keyword id="KW-0732">Signal</keyword>
<keyword id="KW-0800">Toxin</keyword>
<keyword id="KW-1218">Voltage-gated calcium channel impairing toxin</keyword>